<feature type="chain" id="PRO_0000047730" description="Zinc finger and BTB domain-containing protein 17">
    <location>
        <begin position="1"/>
        <end position="803"/>
    </location>
</feature>
<feature type="domain" description="BTB" evidence="3">
    <location>
        <begin position="1"/>
        <end position="104"/>
    </location>
</feature>
<feature type="zinc finger region" description="C2H2-type 1" evidence="4">
    <location>
        <begin position="306"/>
        <end position="328"/>
    </location>
</feature>
<feature type="zinc finger region" description="C2H2-type 2" evidence="4">
    <location>
        <begin position="334"/>
        <end position="356"/>
    </location>
</feature>
<feature type="zinc finger region" description="C2H2-type 3" evidence="4">
    <location>
        <begin position="362"/>
        <end position="384"/>
    </location>
</feature>
<feature type="zinc finger region" description="C2H2-type 4" evidence="4">
    <location>
        <begin position="390"/>
        <end position="412"/>
    </location>
</feature>
<feature type="zinc finger region" description="C2H2-type 5" evidence="4">
    <location>
        <begin position="418"/>
        <end position="440"/>
    </location>
</feature>
<feature type="zinc finger region" description="C2H2-type 6" evidence="4">
    <location>
        <begin position="446"/>
        <end position="468"/>
    </location>
</feature>
<feature type="zinc finger region" description="C2H2-type 7" evidence="4">
    <location>
        <begin position="474"/>
        <end position="496"/>
    </location>
</feature>
<feature type="zinc finger region" description="C2H2-type 8" evidence="4">
    <location>
        <begin position="502"/>
        <end position="524"/>
    </location>
</feature>
<feature type="zinc finger region" description="C2H2-type 9" evidence="4">
    <location>
        <begin position="530"/>
        <end position="552"/>
    </location>
</feature>
<feature type="zinc finger region" description="C2H2-type 10" evidence="4">
    <location>
        <begin position="558"/>
        <end position="580"/>
    </location>
</feature>
<feature type="zinc finger region" description="C2H2-type 11" evidence="4">
    <location>
        <begin position="586"/>
        <end position="608"/>
    </location>
</feature>
<feature type="zinc finger region" description="C2H2-type 12" evidence="4">
    <location>
        <begin position="614"/>
        <end position="637"/>
    </location>
</feature>
<feature type="zinc finger region" description="C2H2-type 13" evidence="4">
    <location>
        <begin position="717"/>
        <end position="739"/>
    </location>
</feature>
<feature type="region of interest" description="Disordered" evidence="5">
    <location>
        <begin position="116"/>
        <end position="295"/>
    </location>
</feature>
<feature type="region of interest" description="Interaction with MYC">
    <location>
        <begin position="269"/>
        <end position="308"/>
    </location>
</feature>
<feature type="region of interest" description="Interaction with HCFC1" evidence="6">
    <location>
        <begin position="637"/>
        <end position="803"/>
    </location>
</feature>
<feature type="region of interest" description="Interaction with MYC">
    <location>
        <begin position="637"/>
        <end position="718"/>
    </location>
</feature>
<feature type="region of interest" description="Disordered" evidence="5">
    <location>
        <begin position="779"/>
        <end position="803"/>
    </location>
</feature>
<feature type="compositionally biased region" description="Basic and acidic residues" evidence="5">
    <location>
        <begin position="132"/>
        <end position="142"/>
    </location>
</feature>
<feature type="compositionally biased region" description="Low complexity" evidence="5">
    <location>
        <begin position="171"/>
        <end position="180"/>
    </location>
</feature>
<feature type="compositionally biased region" description="Low complexity" evidence="5">
    <location>
        <begin position="206"/>
        <end position="217"/>
    </location>
</feature>
<feature type="compositionally biased region" description="Acidic residues" evidence="5">
    <location>
        <begin position="233"/>
        <end position="244"/>
    </location>
</feature>
<feature type="compositionally biased region" description="Acidic residues" evidence="5">
    <location>
        <begin position="261"/>
        <end position="272"/>
    </location>
</feature>
<feature type="modified residue" description="Phosphoserine" evidence="19">
    <location>
        <position position="120"/>
    </location>
</feature>
<feature type="cross-link" description="Glycyl lysine isopeptide (Lys-Gly) (interchain with G-Cter in ubiquitin)" evidence="2">
    <location>
        <position position="397"/>
    </location>
</feature>
<feature type="cross-link" description="Glycyl lysine isopeptide (Lys-Gly) (interchain with G-Cter in ubiquitin)" evidence="2">
    <location>
        <position position="481"/>
    </location>
</feature>
<feature type="splice variant" id="VSP_044564" description="In isoform 3." evidence="16">
    <original>MDFPQHSQHVLEQLNQQRQLGLLCDCTFVVDGVHFKAHKAVLAACSEYFKMLFVDQKDVVHLDISNAAGLGQVLEFMYTAKLSLSPENVDDVLAVATFLQMQDIITACHALKSLAEPATSPGGNAEALATE</original>
    <variation>MMCWPWPLSSKCRTSSRPAMPSSHLLSRLPALGEMRRPWPQKVCPVPSP</variation>
    <location>
        <begin position="1"/>
        <end position="131"/>
    </location>
</feature>
<feature type="splice variant" id="VSP_013424" description="In isoform 2." evidence="17">
    <original>T</original>
    <variation>TGPATLPA</variation>
    <location>
        <position position="679"/>
    </location>
</feature>
<feature type="sequence conflict" description="In Ref. 1; CAA70889." evidence="18" ref="1">
    <original>V</original>
    <variation>M</variation>
    <location>
        <position position="73"/>
    </location>
</feature>
<feature type="sequence conflict" description="In Ref. 2; BAG63326." evidence="18" ref="2">
    <original>F</original>
    <variation>S</variation>
    <location>
        <position position="334"/>
    </location>
</feature>
<feature type="helix" evidence="35">
    <location>
        <begin position="6"/>
        <end position="19"/>
    </location>
</feature>
<feature type="turn" evidence="35">
    <location>
        <begin position="20"/>
        <end position="23"/>
    </location>
</feature>
<feature type="strand" evidence="35">
    <location>
        <begin position="26"/>
        <end position="30"/>
    </location>
</feature>
<feature type="strand" evidence="35">
    <location>
        <begin position="33"/>
        <end position="37"/>
    </location>
</feature>
<feature type="helix" evidence="35">
    <location>
        <begin position="39"/>
        <end position="45"/>
    </location>
</feature>
<feature type="helix" evidence="35">
    <location>
        <begin position="47"/>
        <end position="54"/>
    </location>
</feature>
<feature type="helix" evidence="29">
    <location>
        <begin position="56"/>
        <end position="58"/>
    </location>
</feature>
<feature type="helix" evidence="28">
    <location>
        <begin position="59"/>
        <end position="64"/>
    </location>
</feature>
<feature type="helix" evidence="35">
    <location>
        <begin position="67"/>
        <end position="79"/>
    </location>
</feature>
<feature type="strand" evidence="30">
    <location>
        <begin position="80"/>
        <end position="84"/>
    </location>
</feature>
<feature type="turn" evidence="35">
    <location>
        <begin position="86"/>
        <end position="88"/>
    </location>
</feature>
<feature type="helix" evidence="35">
    <location>
        <begin position="89"/>
        <end position="98"/>
    </location>
</feature>
<feature type="helix" evidence="35">
    <location>
        <begin position="102"/>
        <end position="114"/>
    </location>
</feature>
<feature type="turn" evidence="26">
    <location>
        <begin position="337"/>
        <end position="339"/>
    </location>
</feature>
<feature type="strand" evidence="26">
    <location>
        <begin position="342"/>
        <end position="344"/>
    </location>
</feature>
<feature type="helix" evidence="26">
    <location>
        <begin position="348"/>
        <end position="356"/>
    </location>
</feature>
<feature type="turn" evidence="27">
    <location>
        <begin position="365"/>
        <end position="367"/>
    </location>
</feature>
<feature type="strand" evidence="27">
    <location>
        <begin position="370"/>
        <end position="373"/>
    </location>
</feature>
<feature type="helix" evidence="27">
    <location>
        <begin position="374"/>
        <end position="384"/>
    </location>
</feature>
<feature type="turn" evidence="27">
    <location>
        <begin position="393"/>
        <end position="395"/>
    </location>
</feature>
<feature type="strand" evidence="27">
    <location>
        <begin position="398"/>
        <end position="401"/>
    </location>
</feature>
<feature type="helix" evidence="27">
    <location>
        <begin position="402"/>
        <end position="409"/>
    </location>
</feature>
<feature type="turn" evidence="23">
    <location>
        <begin position="421"/>
        <end position="423"/>
    </location>
</feature>
<feature type="strand" evidence="23">
    <location>
        <begin position="426"/>
        <end position="428"/>
    </location>
</feature>
<feature type="helix" evidence="23">
    <location>
        <begin position="430"/>
        <end position="438"/>
    </location>
</feature>
<feature type="turn" evidence="24">
    <location>
        <begin position="457"/>
        <end position="459"/>
    </location>
</feature>
<feature type="helix" evidence="24">
    <location>
        <begin position="460"/>
        <end position="469"/>
    </location>
</feature>
<feature type="turn" evidence="25">
    <location>
        <begin position="477"/>
        <end position="479"/>
    </location>
</feature>
<feature type="strand" evidence="25">
    <location>
        <begin position="482"/>
        <end position="484"/>
    </location>
</feature>
<feature type="helix" evidence="25">
    <location>
        <begin position="486"/>
        <end position="497"/>
    </location>
</feature>
<feature type="turn" evidence="20">
    <location>
        <begin position="505"/>
        <end position="507"/>
    </location>
</feature>
<feature type="strand" evidence="20">
    <location>
        <begin position="510"/>
        <end position="512"/>
    </location>
</feature>
<feature type="helix" evidence="20">
    <location>
        <begin position="514"/>
        <end position="525"/>
    </location>
</feature>
<feature type="turn" evidence="21">
    <location>
        <begin position="533"/>
        <end position="535"/>
    </location>
</feature>
<feature type="strand" evidence="21">
    <location>
        <begin position="538"/>
        <end position="541"/>
    </location>
</feature>
<feature type="helix" evidence="21">
    <location>
        <begin position="542"/>
        <end position="553"/>
    </location>
</feature>
<feature type="turn" evidence="22">
    <location>
        <begin position="561"/>
        <end position="563"/>
    </location>
</feature>
<feature type="strand" evidence="32">
    <location>
        <begin position="566"/>
        <end position="568"/>
    </location>
</feature>
<feature type="helix" evidence="22">
    <location>
        <begin position="570"/>
        <end position="578"/>
    </location>
</feature>
<feature type="turn" evidence="32">
    <location>
        <begin position="579"/>
        <end position="583"/>
    </location>
</feature>
<feature type="strand" evidence="33">
    <location>
        <begin position="586"/>
        <end position="588"/>
    </location>
</feature>
<feature type="helix" evidence="33">
    <location>
        <begin position="589"/>
        <end position="591"/>
    </location>
</feature>
<feature type="strand" evidence="33">
    <location>
        <begin position="593"/>
        <end position="595"/>
    </location>
</feature>
<feature type="helix" evidence="33">
    <location>
        <begin position="598"/>
        <end position="608"/>
    </location>
</feature>
<feature type="turn" evidence="34">
    <location>
        <begin position="617"/>
        <end position="619"/>
    </location>
</feature>
<feature type="strand" evidence="34">
    <location>
        <begin position="622"/>
        <end position="624"/>
    </location>
</feature>
<feature type="helix" evidence="34">
    <location>
        <begin position="626"/>
        <end position="636"/>
    </location>
</feature>
<feature type="strand" evidence="31">
    <location>
        <begin position="717"/>
        <end position="719"/>
    </location>
</feature>
<feature type="turn" evidence="31">
    <location>
        <begin position="720"/>
        <end position="723"/>
    </location>
</feature>
<feature type="strand" evidence="31">
    <location>
        <begin position="724"/>
        <end position="727"/>
    </location>
</feature>
<feature type="helix" evidence="31">
    <location>
        <begin position="729"/>
        <end position="740"/>
    </location>
</feature>
<proteinExistence type="evidence at protein level"/>
<gene>
    <name type="primary">ZBTB17</name>
    <name type="synonym">MIZ1</name>
    <name type="synonym">ZNF151</name>
    <name type="synonym">ZNF60</name>
</gene>
<organism>
    <name type="scientific">Homo sapiens</name>
    <name type="common">Human</name>
    <dbReference type="NCBI Taxonomy" id="9606"/>
    <lineage>
        <taxon>Eukaryota</taxon>
        <taxon>Metazoa</taxon>
        <taxon>Chordata</taxon>
        <taxon>Craniata</taxon>
        <taxon>Vertebrata</taxon>
        <taxon>Euteleostomi</taxon>
        <taxon>Mammalia</taxon>
        <taxon>Eutheria</taxon>
        <taxon>Euarchontoglires</taxon>
        <taxon>Primates</taxon>
        <taxon>Haplorrhini</taxon>
        <taxon>Catarrhini</taxon>
        <taxon>Hominidae</taxon>
        <taxon>Homo</taxon>
    </lineage>
</organism>
<sequence>MDFPQHSQHVLEQLNQQRQLGLLCDCTFVVDGVHFKAHKAVLAACSEYFKMLFVDQKDVVHLDISNAAGLGQVLEFMYTAKLSLSPENVDDVLAVATFLQMQDIITACHALKSLAEPATSPGGNAEALATEGGDKRAKEEKVATSTLSRLEQAGRSTPIGPSRDLKEERGGQAQSAASGAEQTEKADAPREPPPVELKPDPTSGMAAAEAEAALSESSEQEMEVEPARKGEEEQKEQEEQEEEGAGPAEVKEEGSQLENGEAPEENENEESAGTDSGQELGSEARGLRSGTYGDRTESKAYGSVIHKCEDCGKEFTHTGNFKRHIRIHTGEKPFSCRECSKAFSDPAACKAHEKTHSPLKPYGCEECGKSYRLISLLNLHKKRHSGEARYRCEDCGKLFTTSGNLKRHQLVHSGEKPYQCDYCGRSFSDPTSKMRHLETHDTDKEHKCPHCDKKFNQVGNLKAHLKIHIADGPLKCRECGKQFTTSGNLKRHLRIHSGEKPYVCIHCQRQFADPGALQRHVRIHTGEKPCQCVMCGKAFTQASSLIAHVRQHTGEKPYVCERCGKRFVQSSQLANHIRHHDNIRPHKCSVCSKAFVNVGDLSKHIIIHTGEKPYLCDKCGRGFNRVDNLRSHVKTVHQGKAGIKILEPEEGSEVSVVTVDDMVTLATEALAATAVTQLTVVPVGAAVTADETEVLKAEISKAVKQVQEEDPNTHILYACDSCGDKFLDANSLAQHVRIHTAQALVMFQTDADFYQQYGPGGTWPAGQVLQAGELVFRPRDGAEGQPALAETSPTAPECPPPAE</sequence>
<evidence type="ECO:0000250" key="1"/>
<evidence type="ECO:0000250" key="2">
    <source>
        <dbReference type="UniProtKB" id="Q60821"/>
    </source>
</evidence>
<evidence type="ECO:0000255" key="3">
    <source>
        <dbReference type="PROSITE-ProRule" id="PRU00037"/>
    </source>
</evidence>
<evidence type="ECO:0000255" key="4">
    <source>
        <dbReference type="PROSITE-ProRule" id="PRU00042"/>
    </source>
</evidence>
<evidence type="ECO:0000256" key="5">
    <source>
        <dbReference type="SAM" id="MobiDB-lite"/>
    </source>
</evidence>
<evidence type="ECO:0000269" key="6">
    <source>
    </source>
</evidence>
<evidence type="ECO:0000269" key="7">
    <source>
    </source>
</evidence>
<evidence type="ECO:0000269" key="8">
    <source>
    </source>
</evidence>
<evidence type="ECO:0000269" key="9">
    <source>
    </source>
</evidence>
<evidence type="ECO:0000269" key="10">
    <source>
    </source>
</evidence>
<evidence type="ECO:0000269" key="11">
    <source>
    </source>
</evidence>
<evidence type="ECO:0000269" key="12">
    <source>
    </source>
</evidence>
<evidence type="ECO:0000269" key="13">
    <source>
    </source>
</evidence>
<evidence type="ECO:0000269" key="14">
    <source>
    </source>
</evidence>
<evidence type="ECO:0000269" key="15">
    <source>
    </source>
</evidence>
<evidence type="ECO:0000303" key="16">
    <source>
    </source>
</evidence>
<evidence type="ECO:0000303" key="17">
    <source>
    </source>
</evidence>
<evidence type="ECO:0000305" key="18"/>
<evidence type="ECO:0007744" key="19">
    <source>
    </source>
</evidence>
<evidence type="ECO:0007829" key="20">
    <source>
        <dbReference type="PDB" id="2LVR"/>
    </source>
</evidence>
<evidence type="ECO:0007829" key="21">
    <source>
        <dbReference type="PDB" id="2LVT"/>
    </source>
</evidence>
<evidence type="ECO:0007829" key="22">
    <source>
        <dbReference type="PDB" id="2LVU"/>
    </source>
</evidence>
<evidence type="ECO:0007829" key="23">
    <source>
        <dbReference type="PDB" id="2M0D"/>
    </source>
</evidence>
<evidence type="ECO:0007829" key="24">
    <source>
        <dbReference type="PDB" id="2M0E"/>
    </source>
</evidence>
<evidence type="ECO:0007829" key="25">
    <source>
        <dbReference type="PDB" id="2M0F"/>
    </source>
</evidence>
<evidence type="ECO:0007829" key="26">
    <source>
        <dbReference type="PDB" id="2N25"/>
    </source>
</evidence>
<evidence type="ECO:0007829" key="27">
    <source>
        <dbReference type="PDB" id="2N26"/>
    </source>
</evidence>
<evidence type="ECO:0007829" key="28">
    <source>
        <dbReference type="PDB" id="2Q81"/>
    </source>
</evidence>
<evidence type="ECO:0007829" key="29">
    <source>
        <dbReference type="PDB" id="3M52"/>
    </source>
</evidence>
<evidence type="ECO:0007829" key="30">
    <source>
        <dbReference type="PDB" id="4U2M"/>
    </source>
</evidence>
<evidence type="ECO:0007829" key="31">
    <source>
        <dbReference type="PDB" id="5ION"/>
    </source>
</evidence>
<evidence type="ECO:0007829" key="32">
    <source>
        <dbReference type="PDB" id="7MC1"/>
    </source>
</evidence>
<evidence type="ECO:0007829" key="33">
    <source>
        <dbReference type="PDB" id="7MC2"/>
    </source>
</evidence>
<evidence type="ECO:0007829" key="34">
    <source>
        <dbReference type="PDB" id="7MC3"/>
    </source>
</evidence>
<evidence type="ECO:0007829" key="35">
    <source>
        <dbReference type="PDB" id="7T58"/>
    </source>
</evidence>
<name>ZBT17_HUMAN</name>
<reference key="1">
    <citation type="journal article" date="1997" name="EMBO J.">
        <title>An alternative pathway for gene regulation by Myc.</title>
        <authorList>
            <person name="Peukert K."/>
            <person name="Staller P."/>
            <person name="Schneider A."/>
            <person name="Carmichael G."/>
            <person name="Haenel F."/>
            <person name="Eilers M."/>
        </authorList>
    </citation>
    <scope>NUCLEOTIDE SEQUENCE [MRNA] (ISOFORM 1)</scope>
    <scope>FUNCTION</scope>
    <scope>SUBCELLULAR LOCATION</scope>
    <scope>INTERACTION WITH MYC</scope>
</reference>
<reference key="2">
    <citation type="journal article" date="2004" name="Nat. Genet.">
        <title>Complete sequencing and characterization of 21,243 full-length human cDNAs.</title>
        <authorList>
            <person name="Ota T."/>
            <person name="Suzuki Y."/>
            <person name="Nishikawa T."/>
            <person name="Otsuki T."/>
            <person name="Sugiyama T."/>
            <person name="Irie R."/>
            <person name="Wakamatsu A."/>
            <person name="Hayashi K."/>
            <person name="Sato H."/>
            <person name="Nagai K."/>
            <person name="Kimura K."/>
            <person name="Makita H."/>
            <person name="Sekine M."/>
            <person name="Obayashi M."/>
            <person name="Nishi T."/>
            <person name="Shibahara T."/>
            <person name="Tanaka T."/>
            <person name="Ishii S."/>
            <person name="Yamamoto J."/>
            <person name="Saito K."/>
            <person name="Kawai Y."/>
            <person name="Isono Y."/>
            <person name="Nakamura Y."/>
            <person name="Nagahari K."/>
            <person name="Murakami K."/>
            <person name="Yasuda T."/>
            <person name="Iwayanagi T."/>
            <person name="Wagatsuma M."/>
            <person name="Shiratori A."/>
            <person name="Sudo H."/>
            <person name="Hosoiri T."/>
            <person name="Kaku Y."/>
            <person name="Kodaira H."/>
            <person name="Kondo H."/>
            <person name="Sugawara M."/>
            <person name="Takahashi M."/>
            <person name="Kanda K."/>
            <person name="Yokoi T."/>
            <person name="Furuya T."/>
            <person name="Kikkawa E."/>
            <person name="Omura Y."/>
            <person name="Abe K."/>
            <person name="Kamihara K."/>
            <person name="Katsuta N."/>
            <person name="Sato K."/>
            <person name="Tanikawa M."/>
            <person name="Yamazaki M."/>
            <person name="Ninomiya K."/>
            <person name="Ishibashi T."/>
            <person name="Yamashita H."/>
            <person name="Murakawa K."/>
            <person name="Fujimori K."/>
            <person name="Tanai H."/>
            <person name="Kimata M."/>
            <person name="Watanabe M."/>
            <person name="Hiraoka S."/>
            <person name="Chiba Y."/>
            <person name="Ishida S."/>
            <person name="Ono Y."/>
            <person name="Takiguchi S."/>
            <person name="Watanabe S."/>
            <person name="Yosida M."/>
            <person name="Hotuta T."/>
            <person name="Kusano J."/>
            <person name="Kanehori K."/>
            <person name="Takahashi-Fujii A."/>
            <person name="Hara H."/>
            <person name="Tanase T.-O."/>
            <person name="Nomura Y."/>
            <person name="Togiya S."/>
            <person name="Komai F."/>
            <person name="Hara R."/>
            <person name="Takeuchi K."/>
            <person name="Arita M."/>
            <person name="Imose N."/>
            <person name="Musashino K."/>
            <person name="Yuuki H."/>
            <person name="Oshima A."/>
            <person name="Sasaki N."/>
            <person name="Aotsuka S."/>
            <person name="Yoshikawa Y."/>
            <person name="Matsunawa H."/>
            <person name="Ichihara T."/>
            <person name="Shiohata N."/>
            <person name="Sano S."/>
            <person name="Moriya S."/>
            <person name="Momiyama H."/>
            <person name="Satoh N."/>
            <person name="Takami S."/>
            <person name="Terashima Y."/>
            <person name="Suzuki O."/>
            <person name="Nakagawa S."/>
            <person name="Senoh A."/>
            <person name="Mizoguchi H."/>
            <person name="Goto Y."/>
            <person name="Shimizu F."/>
            <person name="Wakebe H."/>
            <person name="Hishigaki H."/>
            <person name="Watanabe T."/>
            <person name="Sugiyama A."/>
            <person name="Takemoto M."/>
            <person name="Kawakami B."/>
            <person name="Yamazaki M."/>
            <person name="Watanabe K."/>
            <person name="Kumagai A."/>
            <person name="Itakura S."/>
            <person name="Fukuzumi Y."/>
            <person name="Fujimori Y."/>
            <person name="Komiyama M."/>
            <person name="Tashiro H."/>
            <person name="Tanigami A."/>
            <person name="Fujiwara T."/>
            <person name="Ono T."/>
            <person name="Yamada K."/>
            <person name="Fujii Y."/>
            <person name="Ozaki K."/>
            <person name="Hirao M."/>
            <person name="Ohmori Y."/>
            <person name="Kawabata A."/>
            <person name="Hikiji T."/>
            <person name="Kobatake N."/>
            <person name="Inagaki H."/>
            <person name="Ikema Y."/>
            <person name="Okamoto S."/>
            <person name="Okitani R."/>
            <person name="Kawakami T."/>
            <person name="Noguchi S."/>
            <person name="Itoh T."/>
            <person name="Shigeta K."/>
            <person name="Senba T."/>
            <person name="Matsumura K."/>
            <person name="Nakajima Y."/>
            <person name="Mizuno T."/>
            <person name="Morinaga M."/>
            <person name="Sasaki M."/>
            <person name="Togashi T."/>
            <person name="Oyama M."/>
            <person name="Hata H."/>
            <person name="Watanabe M."/>
            <person name="Komatsu T."/>
            <person name="Mizushima-Sugano J."/>
            <person name="Satoh T."/>
            <person name="Shirai Y."/>
            <person name="Takahashi Y."/>
            <person name="Nakagawa K."/>
            <person name="Okumura K."/>
            <person name="Nagase T."/>
            <person name="Nomura N."/>
            <person name="Kikuchi H."/>
            <person name="Masuho Y."/>
            <person name="Yamashita R."/>
            <person name="Nakai K."/>
            <person name="Yada T."/>
            <person name="Nakamura Y."/>
            <person name="Ohara O."/>
            <person name="Isogai T."/>
            <person name="Sugano S."/>
        </authorList>
    </citation>
    <scope>NUCLEOTIDE SEQUENCE [LARGE SCALE MRNA] (ISOFORM 3)</scope>
    <source>
        <tissue>Testis</tissue>
    </source>
</reference>
<reference key="3">
    <citation type="journal article" date="2006" name="Nature">
        <title>The DNA sequence and biological annotation of human chromosome 1.</title>
        <authorList>
            <person name="Gregory S.G."/>
            <person name="Barlow K.F."/>
            <person name="McLay K.E."/>
            <person name="Kaul R."/>
            <person name="Swarbreck D."/>
            <person name="Dunham A."/>
            <person name="Scott C.E."/>
            <person name="Howe K.L."/>
            <person name="Woodfine K."/>
            <person name="Spencer C.C.A."/>
            <person name="Jones M.C."/>
            <person name="Gillson C."/>
            <person name="Searle S."/>
            <person name="Zhou Y."/>
            <person name="Kokocinski F."/>
            <person name="McDonald L."/>
            <person name="Evans R."/>
            <person name="Phillips K."/>
            <person name="Atkinson A."/>
            <person name="Cooper R."/>
            <person name="Jones C."/>
            <person name="Hall R.E."/>
            <person name="Andrews T.D."/>
            <person name="Lloyd C."/>
            <person name="Ainscough R."/>
            <person name="Almeida J.P."/>
            <person name="Ambrose K.D."/>
            <person name="Anderson F."/>
            <person name="Andrew R.W."/>
            <person name="Ashwell R.I.S."/>
            <person name="Aubin K."/>
            <person name="Babbage A.K."/>
            <person name="Bagguley C.L."/>
            <person name="Bailey J."/>
            <person name="Beasley H."/>
            <person name="Bethel G."/>
            <person name="Bird C.P."/>
            <person name="Bray-Allen S."/>
            <person name="Brown J.Y."/>
            <person name="Brown A.J."/>
            <person name="Buckley D."/>
            <person name="Burton J."/>
            <person name="Bye J."/>
            <person name="Carder C."/>
            <person name="Chapman J.C."/>
            <person name="Clark S.Y."/>
            <person name="Clarke G."/>
            <person name="Clee C."/>
            <person name="Cobley V."/>
            <person name="Collier R.E."/>
            <person name="Corby N."/>
            <person name="Coville G.J."/>
            <person name="Davies J."/>
            <person name="Deadman R."/>
            <person name="Dunn M."/>
            <person name="Earthrowl M."/>
            <person name="Ellington A.G."/>
            <person name="Errington H."/>
            <person name="Frankish A."/>
            <person name="Frankland J."/>
            <person name="French L."/>
            <person name="Garner P."/>
            <person name="Garnett J."/>
            <person name="Gay L."/>
            <person name="Ghori M.R.J."/>
            <person name="Gibson R."/>
            <person name="Gilby L.M."/>
            <person name="Gillett W."/>
            <person name="Glithero R.J."/>
            <person name="Grafham D.V."/>
            <person name="Griffiths C."/>
            <person name="Griffiths-Jones S."/>
            <person name="Grocock R."/>
            <person name="Hammond S."/>
            <person name="Harrison E.S.I."/>
            <person name="Hart E."/>
            <person name="Haugen E."/>
            <person name="Heath P.D."/>
            <person name="Holmes S."/>
            <person name="Holt K."/>
            <person name="Howden P.J."/>
            <person name="Hunt A.R."/>
            <person name="Hunt S.E."/>
            <person name="Hunter G."/>
            <person name="Isherwood J."/>
            <person name="James R."/>
            <person name="Johnson C."/>
            <person name="Johnson D."/>
            <person name="Joy A."/>
            <person name="Kay M."/>
            <person name="Kershaw J.K."/>
            <person name="Kibukawa M."/>
            <person name="Kimberley A.M."/>
            <person name="King A."/>
            <person name="Knights A.J."/>
            <person name="Lad H."/>
            <person name="Laird G."/>
            <person name="Lawlor S."/>
            <person name="Leongamornlert D.A."/>
            <person name="Lloyd D.M."/>
            <person name="Loveland J."/>
            <person name="Lovell J."/>
            <person name="Lush M.J."/>
            <person name="Lyne R."/>
            <person name="Martin S."/>
            <person name="Mashreghi-Mohammadi M."/>
            <person name="Matthews L."/>
            <person name="Matthews N.S.W."/>
            <person name="McLaren S."/>
            <person name="Milne S."/>
            <person name="Mistry S."/>
            <person name="Moore M.J.F."/>
            <person name="Nickerson T."/>
            <person name="O'Dell C.N."/>
            <person name="Oliver K."/>
            <person name="Palmeiri A."/>
            <person name="Palmer S.A."/>
            <person name="Parker A."/>
            <person name="Patel D."/>
            <person name="Pearce A.V."/>
            <person name="Peck A.I."/>
            <person name="Pelan S."/>
            <person name="Phelps K."/>
            <person name="Phillimore B.J."/>
            <person name="Plumb R."/>
            <person name="Rajan J."/>
            <person name="Raymond C."/>
            <person name="Rouse G."/>
            <person name="Saenphimmachak C."/>
            <person name="Sehra H.K."/>
            <person name="Sheridan E."/>
            <person name="Shownkeen R."/>
            <person name="Sims S."/>
            <person name="Skuce C.D."/>
            <person name="Smith M."/>
            <person name="Steward C."/>
            <person name="Subramanian S."/>
            <person name="Sycamore N."/>
            <person name="Tracey A."/>
            <person name="Tromans A."/>
            <person name="Van Helmond Z."/>
            <person name="Wall M."/>
            <person name="Wallis J.M."/>
            <person name="White S."/>
            <person name="Whitehead S.L."/>
            <person name="Wilkinson J.E."/>
            <person name="Willey D.L."/>
            <person name="Williams H."/>
            <person name="Wilming L."/>
            <person name="Wray P.W."/>
            <person name="Wu Z."/>
            <person name="Coulson A."/>
            <person name="Vaudin M."/>
            <person name="Sulston J.E."/>
            <person name="Durbin R.M."/>
            <person name="Hubbard T."/>
            <person name="Wooster R."/>
            <person name="Dunham I."/>
            <person name="Carter N.P."/>
            <person name="McVean G."/>
            <person name="Ross M.T."/>
            <person name="Harrow J."/>
            <person name="Olson M.V."/>
            <person name="Beck S."/>
            <person name="Rogers J."/>
            <person name="Bentley D.R."/>
        </authorList>
    </citation>
    <scope>NUCLEOTIDE SEQUENCE [LARGE SCALE GENOMIC DNA]</scope>
</reference>
<reference key="4">
    <citation type="journal article" date="2004" name="Genome Res.">
        <title>The status, quality, and expansion of the NIH full-length cDNA project: the Mammalian Gene Collection (MGC).</title>
        <authorList>
            <consortium name="The MGC Project Team"/>
        </authorList>
    </citation>
    <scope>NUCLEOTIDE SEQUENCE [LARGE SCALE MRNA] (ISOFORMS 1 AND 2)</scope>
    <source>
        <tissue>Brain</tissue>
    </source>
</reference>
<reference key="5">
    <citation type="journal article" date="1992" name="Genomics">
        <title>Clustering of C2-H2 zinc finger motif sequences within telomeric and fragile site regions of human chromosomes.</title>
        <authorList>
            <person name="Lichter P."/>
            <person name="Bray P."/>
            <person name="Ried T."/>
            <person name="Dawid I.B."/>
            <person name="Ward D.C."/>
        </authorList>
    </citation>
    <scope>NUCLEOTIDE SEQUENCE [GENOMIC DNA] OF 327-342</scope>
    <source>
        <tissue>Placenta</tissue>
    </source>
</reference>
<reference key="6">
    <citation type="journal article" date="1995" name="Genomics">
        <title>Isolation and fine mapping of 16 novel human zinc finger-encoding cDNAs identify putative candidate genes for developmental and malignant disorders.</title>
        <authorList>
            <person name="Tommerup N."/>
            <person name="Vissing H."/>
        </authorList>
    </citation>
    <scope>NUCLEOTIDE SEQUENCE [MRNA] OF 580-803 (ISOFORM 1)</scope>
    <source>
        <tissue>Insulinoma</tissue>
    </source>
</reference>
<reference key="7">
    <citation type="journal article" date="1997" name="Curr. Top. Microbiol. Immunol.">
        <title>Association of Myc with the zinc-finger protein Miz-1 defines a novel pathway for gene regulation by Myc.</title>
        <authorList>
            <person name="Schneider A."/>
            <person name="Peukert K."/>
            <person name="Eilers M."/>
            <person name="Haenel F."/>
        </authorList>
    </citation>
    <scope>FUNCTION</scope>
    <source>
        <tissue>Cervix carcinoma</tissue>
    </source>
</reference>
<reference key="8">
    <citation type="journal article" date="2002" name="J. Biol. Chem.">
        <title>Host cell factor-1 interacts with and antagonizes transactivation by the cell cycle regulatory factor Miz-1.</title>
        <authorList>
            <person name="Piluso D."/>
            <person name="Bilan P."/>
            <person name="Capone J.P."/>
        </authorList>
    </citation>
    <scope>INTERACTION WITH HCFC1</scope>
</reference>
<reference key="9">
    <citation type="journal article" date="2003" name="Oncogene">
        <title>Myc represses differentiation-induced p21CIP1 expression via Miz-1-dependent interaction with the p21 core promoter.</title>
        <authorList>
            <person name="Wu S."/>
            <person name="Cetinkaya C."/>
            <person name="Munoz-Alonso M.J."/>
            <person name="von der Lehr N."/>
            <person name="Bahram F."/>
            <person name="Beuger V."/>
            <person name="Eilers M."/>
            <person name="Leon J."/>
            <person name="Larsson L.-G."/>
        </authorList>
    </citation>
    <scope>INTERACTION WITH MYC</scope>
</reference>
<reference key="10">
    <citation type="journal article" date="2004" name="J. Biol. Chem.">
        <title>A cleaved form of MAGE-A4 binds to Miz-1 and induces apoptosis in human cells.</title>
        <authorList>
            <person name="Sakurai T."/>
            <person name="Itoh K."/>
            <person name="Higashitsuji H."/>
            <person name="Nagao T."/>
            <person name="Nonoguchi K."/>
            <person name="Chiba T."/>
            <person name="Fujita J."/>
        </authorList>
    </citation>
    <scope>INTERACTION WITH MAGEA4</scope>
    <scope>SUBCELLULAR LOCATION</scope>
</reference>
<reference key="11">
    <citation type="journal article" date="2004" name="J. Cell. Biochem.">
        <title>Induction of G1 cell cycle arrest and P15INK4b expression by ECRG1 through interaction with Miz-1.</title>
        <authorList>
            <person name="Zhao N."/>
            <person name="Wang J."/>
            <person name="Cui Y."/>
            <person name="Guo L."/>
            <person name="Lu S.-H."/>
        </authorList>
    </citation>
    <scope>INTERACTION WITH TMPRSS11A</scope>
</reference>
<reference key="12">
    <citation type="journal article" date="2005" name="Nat. Immunol.">
        <title>BCL6 interacts with the transcription factor Miz-1 to suppress the cyclin-dependent kinase inhibitor p21 and cell cycle arrest in germinal center B cells.</title>
        <authorList>
            <person name="Phan R.T."/>
            <person name="Saito M."/>
            <person name="Basso K."/>
            <person name="Niu H."/>
            <person name="Dalla-Favera R."/>
        </authorList>
    </citation>
    <scope>FUNCTION IN CELL CYCLE ARREST</scope>
    <scope>INTERACTION WITH BCL6</scope>
    <scope>TISSUE SPECIFICITY</scope>
</reference>
<reference key="13">
    <citation type="journal article" date="2009" name="Proc. Natl. Acad. Sci. U.S.A.">
        <title>Gfi-1 represses CDKN2B encoding p15INK4B through interaction with Miz-1.</title>
        <authorList>
            <person name="Basu S."/>
            <person name="Liu Q."/>
            <person name="Qiu Y."/>
            <person name="Dong F."/>
        </authorList>
    </citation>
    <scope>FUNCTION</scope>
</reference>
<reference key="14">
    <citation type="journal article" date="2011" name="Sci. Signal.">
        <title>System-wide temporal characterization of the proteome and phosphoproteome of human embryonic stem cell differentiation.</title>
        <authorList>
            <person name="Rigbolt K.T."/>
            <person name="Prokhorova T.A."/>
            <person name="Akimov V."/>
            <person name="Henningsen J."/>
            <person name="Johansen P.T."/>
            <person name="Kratchmarova I."/>
            <person name="Kassem M."/>
            <person name="Mann M."/>
            <person name="Olsen J.V."/>
            <person name="Blagoev B."/>
        </authorList>
    </citation>
    <scope>IDENTIFICATION BY MASS SPECTROMETRY [LARGE SCALE ANALYSIS]</scope>
</reference>
<reference key="15">
    <citation type="journal article" date="2013" name="J. Proteome Res.">
        <title>Toward a comprehensive characterization of a human cancer cell phosphoproteome.</title>
        <authorList>
            <person name="Zhou H."/>
            <person name="Di Palma S."/>
            <person name="Preisinger C."/>
            <person name="Peng M."/>
            <person name="Polat A.N."/>
            <person name="Heck A.J."/>
            <person name="Mohammed S."/>
        </authorList>
    </citation>
    <scope>PHOSPHORYLATION [LARGE SCALE ANALYSIS] AT SER-120</scope>
    <scope>IDENTIFICATION BY MASS SPECTROMETRY [LARGE SCALE ANALYSIS]</scope>
    <source>
        <tissue>Cervix carcinoma</tissue>
        <tissue>Erythroleukemia</tissue>
    </source>
</reference>
<reference key="16">
    <citation type="journal article" date="2014" name="Nucleic Acids Res.">
        <title>Two ZNF509 (ZBTB49) isoforms induce cell-cycle arrest by activating transcription of p21/CDKN1A and RB upon exposure to genotoxic stress.</title>
        <authorList>
            <person name="Jeon B.N."/>
            <person name="Kim M.K."/>
            <person name="Yoon J.H."/>
            <person name="Kim M.Y."/>
            <person name="An H."/>
            <person name="Noh H.J."/>
            <person name="Choi W.I."/>
            <person name="Koh D.I."/>
            <person name="Hur M.W."/>
        </authorList>
    </citation>
    <scope>FUNCTION</scope>
    <scope>INTERACTION WITH ZBTB49</scope>
</reference>
<reference key="17">
    <citation type="journal article" date="2007" name="J. Mol. Biol.">
        <title>A beta-sheet interaction interface directs the tetramerisation of the Miz-1 POZ domain.</title>
        <authorList>
            <person name="Stead M.A."/>
            <person name="Trinh C.H."/>
            <person name="Garnett J.A."/>
            <person name="Carr S.B."/>
            <person name="Baron A.J."/>
            <person name="Edwards T.A."/>
            <person name="Wright S.C."/>
        </authorList>
    </citation>
    <scope>X-RAY CRYSTALLOGRAPHY (2.1 ANGSTROMS) OF 2-115</scope>
    <scope>SUBUNIT</scope>
</reference>
<protein>
    <recommendedName>
        <fullName>Zinc finger and BTB domain-containing protein 17</fullName>
    </recommendedName>
    <alternativeName>
        <fullName>Myc-interacting zinc finger protein 1</fullName>
        <shortName>Miz-1</shortName>
    </alternativeName>
    <alternativeName>
        <fullName>Zinc finger protein 151</fullName>
    </alternativeName>
    <alternativeName>
        <fullName>Zinc finger protein 60</fullName>
    </alternativeName>
</protein>
<keyword id="KW-0002">3D-structure</keyword>
<keyword id="KW-0025">Alternative splicing</keyword>
<keyword id="KW-0217">Developmental protein</keyword>
<keyword id="KW-0238">DNA-binding</keyword>
<keyword id="KW-1017">Isopeptide bond</keyword>
<keyword id="KW-0479">Metal-binding</keyword>
<keyword id="KW-0539">Nucleus</keyword>
<keyword id="KW-0597">Phosphoprotein</keyword>
<keyword id="KW-1267">Proteomics identification</keyword>
<keyword id="KW-1185">Reference proteome</keyword>
<keyword id="KW-0677">Repeat</keyword>
<keyword id="KW-0804">Transcription</keyword>
<keyword id="KW-0805">Transcription regulation</keyword>
<keyword id="KW-0832">Ubl conjugation</keyword>
<keyword id="KW-0862">Zinc</keyword>
<keyword id="KW-0863">Zinc-finger</keyword>
<dbReference type="EMBL" id="Y09723">
    <property type="protein sequence ID" value="CAA70889.1"/>
    <property type="molecule type" value="mRNA"/>
</dbReference>
<dbReference type="EMBL" id="AK301896">
    <property type="protein sequence ID" value="BAG63326.1"/>
    <property type="molecule type" value="mRNA"/>
</dbReference>
<dbReference type="EMBL" id="AL034555">
    <property type="status" value="NOT_ANNOTATED_CDS"/>
    <property type="molecule type" value="Genomic_DNA"/>
</dbReference>
<dbReference type="EMBL" id="AL355994">
    <property type="status" value="NOT_ANNOTATED_CDS"/>
    <property type="molecule type" value="Genomic_DNA"/>
</dbReference>
<dbReference type="EMBL" id="BC126163">
    <property type="protein sequence ID" value="AAI26164.1"/>
    <property type="molecule type" value="mRNA"/>
</dbReference>
<dbReference type="EMBL" id="BC143965">
    <property type="protein sequence ID" value="AAI43966.1"/>
    <property type="molecule type" value="mRNA"/>
</dbReference>
<dbReference type="EMBL" id="M88369">
    <property type="protein sequence ID" value="AAA61327.1"/>
    <property type="molecule type" value="Genomic_DNA"/>
</dbReference>
<dbReference type="EMBL" id="U20647">
    <property type="protein sequence ID" value="AAC50256.1"/>
    <property type="molecule type" value="mRNA"/>
</dbReference>
<dbReference type="CCDS" id="CCDS165.1">
    <molecule id="Q13105-1"/>
</dbReference>
<dbReference type="CCDS" id="CCDS55576.1">
    <molecule id="Q13105-3"/>
</dbReference>
<dbReference type="CCDS" id="CCDS72712.1">
    <molecule id="Q13105-2"/>
</dbReference>
<dbReference type="PIR" id="D45193">
    <property type="entry name" value="D45193"/>
</dbReference>
<dbReference type="PIR" id="I38940">
    <property type="entry name" value="I38940"/>
</dbReference>
<dbReference type="RefSeq" id="NP_001229813.1">
    <molecule id="Q13105-3"/>
    <property type="nucleotide sequence ID" value="NM_001242884.2"/>
</dbReference>
<dbReference type="RefSeq" id="NP_001274532.1">
    <molecule id="Q13105-2"/>
    <property type="nucleotide sequence ID" value="NM_001287603.2"/>
</dbReference>
<dbReference type="RefSeq" id="NP_003434.2">
    <molecule id="Q13105-1"/>
    <property type="nucleotide sequence ID" value="NM_003443.3"/>
</dbReference>
<dbReference type="RefSeq" id="XP_011540390.1">
    <property type="nucleotide sequence ID" value="XM_011542088.1"/>
</dbReference>
<dbReference type="PDB" id="2LVR">
    <property type="method" value="NMR"/>
    <property type="chains" value="A=500-581"/>
</dbReference>
<dbReference type="PDB" id="2LVT">
    <property type="method" value="NMR"/>
    <property type="chains" value="A=500-581"/>
</dbReference>
<dbReference type="PDB" id="2LVU">
    <property type="method" value="NMR"/>
    <property type="chains" value="A=500-581"/>
</dbReference>
<dbReference type="PDB" id="2M0D">
    <property type="method" value="NMR"/>
    <property type="chains" value="A=416-526"/>
</dbReference>
<dbReference type="PDB" id="2M0E">
    <property type="method" value="NMR"/>
    <property type="chains" value="A=416-526"/>
</dbReference>
<dbReference type="PDB" id="2M0F">
    <property type="method" value="NMR"/>
    <property type="chains" value="A=416-526"/>
</dbReference>
<dbReference type="PDB" id="2N25">
    <property type="method" value="NMR"/>
    <property type="chains" value="A=304-414"/>
</dbReference>
<dbReference type="PDB" id="2N26">
    <property type="method" value="NMR"/>
    <property type="chains" value="A=304-414"/>
</dbReference>
<dbReference type="PDB" id="2Q81">
    <property type="method" value="X-ray"/>
    <property type="resolution" value="2.10 A"/>
    <property type="chains" value="A/B/C/D=2-115"/>
</dbReference>
<dbReference type="PDB" id="3M52">
    <property type="method" value="X-ray"/>
    <property type="resolution" value="2.59 A"/>
    <property type="chains" value="A/B=1-115"/>
</dbReference>
<dbReference type="PDB" id="4U2M">
    <property type="method" value="X-ray"/>
    <property type="resolution" value="2.23 A"/>
    <property type="chains" value="A/B/C/D=2-115"/>
</dbReference>
<dbReference type="PDB" id="4U2N">
    <property type="method" value="X-ray"/>
    <property type="resolution" value="2.30 A"/>
    <property type="chains" value="A/B=2-115"/>
</dbReference>
<dbReference type="PDB" id="5ION">
    <property type="method" value="NMR"/>
    <property type="chains" value="A=714-742"/>
</dbReference>
<dbReference type="PDB" id="7AZW">
    <property type="method" value="X-ray"/>
    <property type="resolution" value="2.10 A"/>
    <property type="chains" value="A/B=1-115"/>
</dbReference>
<dbReference type="PDB" id="7AZX">
    <property type="method" value="X-ray"/>
    <property type="resolution" value="2.25 A"/>
    <property type="chains" value="A/B=1-115"/>
</dbReference>
<dbReference type="PDB" id="7MC1">
    <property type="method" value="NMR"/>
    <property type="chains" value="A=556-639"/>
</dbReference>
<dbReference type="PDB" id="7MC2">
    <property type="method" value="NMR"/>
    <property type="chains" value="A=556-639"/>
</dbReference>
<dbReference type="PDB" id="7MC3">
    <property type="method" value="NMR"/>
    <property type="chains" value="A=556-639"/>
</dbReference>
<dbReference type="PDB" id="7T58">
    <property type="method" value="X-ray"/>
    <property type="resolution" value="2.05 A"/>
    <property type="chains" value="A/B=1-115"/>
</dbReference>
<dbReference type="PDBsum" id="2LVR"/>
<dbReference type="PDBsum" id="2LVT"/>
<dbReference type="PDBsum" id="2LVU"/>
<dbReference type="PDBsum" id="2M0D"/>
<dbReference type="PDBsum" id="2M0E"/>
<dbReference type="PDBsum" id="2M0F"/>
<dbReference type="PDBsum" id="2N25"/>
<dbReference type="PDBsum" id="2N26"/>
<dbReference type="PDBsum" id="2Q81"/>
<dbReference type="PDBsum" id="3M52"/>
<dbReference type="PDBsum" id="4U2M"/>
<dbReference type="PDBsum" id="4U2N"/>
<dbReference type="PDBsum" id="5ION"/>
<dbReference type="PDBsum" id="7AZW"/>
<dbReference type="PDBsum" id="7AZX"/>
<dbReference type="PDBsum" id="7MC1"/>
<dbReference type="PDBsum" id="7MC2"/>
<dbReference type="PDBsum" id="7MC3"/>
<dbReference type="PDBsum" id="7T58"/>
<dbReference type="SMR" id="Q13105"/>
<dbReference type="BioGRID" id="113503">
    <property type="interactions" value="50"/>
</dbReference>
<dbReference type="CORUM" id="Q13105"/>
<dbReference type="DIP" id="DIP-5968N"/>
<dbReference type="FunCoup" id="Q13105">
    <property type="interactions" value="806"/>
</dbReference>
<dbReference type="IntAct" id="Q13105">
    <property type="interactions" value="27"/>
</dbReference>
<dbReference type="MINT" id="Q13105"/>
<dbReference type="STRING" id="9606.ENSP00000364885"/>
<dbReference type="ChEMBL" id="CHEMBL5069374"/>
<dbReference type="GlyGen" id="Q13105">
    <property type="glycosylation" value="1 site, 1 O-linked glycan (1 site)"/>
</dbReference>
<dbReference type="iPTMnet" id="Q13105"/>
<dbReference type="PhosphoSitePlus" id="Q13105"/>
<dbReference type="BioMuta" id="ZBTB17"/>
<dbReference type="DMDM" id="62906906"/>
<dbReference type="jPOST" id="Q13105"/>
<dbReference type="MassIVE" id="Q13105"/>
<dbReference type="PaxDb" id="9606-ENSP00000364885"/>
<dbReference type="PeptideAtlas" id="Q13105"/>
<dbReference type="ProteomicsDB" id="26435"/>
<dbReference type="ProteomicsDB" id="59155">
    <molecule id="Q13105-1"/>
</dbReference>
<dbReference type="ProteomicsDB" id="59156">
    <molecule id="Q13105-2"/>
</dbReference>
<dbReference type="Pumba" id="Q13105"/>
<dbReference type="Antibodypedia" id="904">
    <property type="antibodies" value="153 antibodies from 25 providers"/>
</dbReference>
<dbReference type="DNASU" id="7709"/>
<dbReference type="Ensembl" id="ENST00000375733.6">
    <molecule id="Q13105-2"/>
    <property type="protein sequence ID" value="ENSP00000364885.2"/>
    <property type="gene ID" value="ENSG00000116809.12"/>
</dbReference>
<dbReference type="Ensembl" id="ENST00000375743.9">
    <molecule id="Q13105-1"/>
    <property type="protein sequence ID" value="ENSP00000364895.4"/>
    <property type="gene ID" value="ENSG00000116809.12"/>
</dbReference>
<dbReference type="Ensembl" id="ENST00000537142.5">
    <molecule id="Q13105-3"/>
    <property type="protein sequence ID" value="ENSP00000438529.1"/>
    <property type="gene ID" value="ENSG00000116809.12"/>
</dbReference>
<dbReference type="GeneID" id="7709"/>
<dbReference type="KEGG" id="hsa:7709"/>
<dbReference type="MANE-Select" id="ENST00000375743.9">
    <property type="protein sequence ID" value="ENSP00000364895.4"/>
    <property type="RefSeq nucleotide sequence ID" value="NM_003443.3"/>
    <property type="RefSeq protein sequence ID" value="NP_003434.2"/>
</dbReference>
<dbReference type="UCSC" id="uc001axl.5">
    <molecule id="Q13105-1"/>
    <property type="organism name" value="human"/>
</dbReference>
<dbReference type="AGR" id="HGNC:12936"/>
<dbReference type="CTD" id="7709"/>
<dbReference type="DisGeNET" id="7709"/>
<dbReference type="GeneCards" id="ZBTB17"/>
<dbReference type="HGNC" id="HGNC:12936">
    <property type="gene designation" value="ZBTB17"/>
</dbReference>
<dbReference type="HPA" id="ENSG00000116809">
    <property type="expression patterns" value="Low tissue specificity"/>
</dbReference>
<dbReference type="MalaCards" id="ZBTB17"/>
<dbReference type="MIM" id="604084">
    <property type="type" value="gene"/>
</dbReference>
<dbReference type="neXtProt" id="NX_Q13105"/>
<dbReference type="OpenTargets" id="ENSG00000116809"/>
<dbReference type="PharmGKB" id="PA37522"/>
<dbReference type="VEuPathDB" id="HostDB:ENSG00000116809"/>
<dbReference type="eggNOG" id="KOG1721">
    <property type="taxonomic scope" value="Eukaryota"/>
</dbReference>
<dbReference type="GeneTree" id="ENSGT00940000159957"/>
<dbReference type="HOGENOM" id="CLU_002678_30_1_1"/>
<dbReference type="InParanoid" id="Q13105"/>
<dbReference type="OMA" id="DKGHKCP"/>
<dbReference type="OrthoDB" id="10018191at2759"/>
<dbReference type="PAN-GO" id="Q13105">
    <property type="GO annotations" value="4 GO annotations based on evolutionary models"/>
</dbReference>
<dbReference type="PhylomeDB" id="Q13105"/>
<dbReference type="TreeFam" id="TF332047"/>
<dbReference type="PathwayCommons" id="Q13105"/>
<dbReference type="Reactome" id="R-HSA-381038">
    <property type="pathway name" value="XBP1(S) activates chaperone genes"/>
</dbReference>
<dbReference type="SignaLink" id="Q13105"/>
<dbReference type="SIGNOR" id="Q13105"/>
<dbReference type="BioGRID-ORCS" id="7709">
    <property type="hits" value="653 hits in 1236 CRISPR screens"/>
</dbReference>
<dbReference type="ChiTaRS" id="ZBTB17">
    <property type="organism name" value="human"/>
</dbReference>
<dbReference type="EvolutionaryTrace" id="Q13105"/>
<dbReference type="GeneWiki" id="ZBTB17"/>
<dbReference type="GenomeRNAi" id="7709"/>
<dbReference type="Pharos" id="Q13105">
    <property type="development level" value="Tbio"/>
</dbReference>
<dbReference type="PRO" id="PR:Q13105"/>
<dbReference type="Proteomes" id="UP000005640">
    <property type="component" value="Chromosome 1"/>
</dbReference>
<dbReference type="RNAct" id="Q13105">
    <property type="molecule type" value="protein"/>
</dbReference>
<dbReference type="Bgee" id="ENSG00000116809">
    <property type="expression patterns" value="Expressed in lower esophagus mucosa and 176 other cell types or tissues"/>
</dbReference>
<dbReference type="ExpressionAtlas" id="Q13105">
    <property type="expression patterns" value="baseline and differential"/>
</dbReference>
<dbReference type="GO" id="GO:0005654">
    <property type="term" value="C:nucleoplasm"/>
    <property type="evidence" value="ECO:0000318"/>
    <property type="project" value="GO_Central"/>
</dbReference>
<dbReference type="GO" id="GO:0032991">
    <property type="term" value="C:protein-containing complex"/>
    <property type="evidence" value="ECO:0000314"/>
    <property type="project" value="CAFA"/>
</dbReference>
<dbReference type="GO" id="GO:0032993">
    <property type="term" value="C:protein-DNA complex"/>
    <property type="evidence" value="ECO:0000315"/>
    <property type="project" value="CAFA"/>
</dbReference>
<dbReference type="GO" id="GO:0001046">
    <property type="term" value="F:core promoter sequence-specific DNA binding"/>
    <property type="evidence" value="ECO:0000314"/>
    <property type="project" value="CAFA"/>
</dbReference>
<dbReference type="GO" id="GO:0001228">
    <property type="term" value="F:DNA-binding transcription activator activity, RNA polymerase II-specific"/>
    <property type="evidence" value="ECO:0000314"/>
    <property type="project" value="NTNU_SB"/>
</dbReference>
<dbReference type="GO" id="GO:0003700">
    <property type="term" value="F:DNA-binding transcription factor activity"/>
    <property type="evidence" value="ECO:0000314"/>
    <property type="project" value="UniProtKB"/>
</dbReference>
<dbReference type="GO" id="GO:0140297">
    <property type="term" value="F:DNA-binding transcription factor binding"/>
    <property type="evidence" value="ECO:0000353"/>
    <property type="project" value="CAFA"/>
</dbReference>
<dbReference type="GO" id="GO:0001227">
    <property type="term" value="F:DNA-binding transcription repressor activity, RNA polymerase II-specific"/>
    <property type="evidence" value="ECO:0000318"/>
    <property type="project" value="GO_Central"/>
</dbReference>
<dbReference type="GO" id="GO:0000978">
    <property type="term" value="F:RNA polymerase II cis-regulatory region sequence-specific DNA binding"/>
    <property type="evidence" value="ECO:0000315"/>
    <property type="project" value="NTNU_SB"/>
</dbReference>
<dbReference type="GO" id="GO:0001223">
    <property type="term" value="F:transcription coactivator binding"/>
    <property type="evidence" value="ECO:0000353"/>
    <property type="project" value="CAFA"/>
</dbReference>
<dbReference type="GO" id="GO:0008270">
    <property type="term" value="F:zinc ion binding"/>
    <property type="evidence" value="ECO:0007669"/>
    <property type="project" value="UniProtKB-KW"/>
</dbReference>
<dbReference type="GO" id="GO:0007398">
    <property type="term" value="P:ectoderm development"/>
    <property type="evidence" value="ECO:0007669"/>
    <property type="project" value="Ensembl"/>
</dbReference>
<dbReference type="GO" id="GO:0070314">
    <property type="term" value="P:G1 to G0 transition"/>
    <property type="evidence" value="ECO:0000314"/>
    <property type="project" value="CAFA"/>
</dbReference>
<dbReference type="GO" id="GO:0001702">
    <property type="term" value="P:gastrulation with mouth forming second"/>
    <property type="evidence" value="ECO:0007669"/>
    <property type="project" value="Ensembl"/>
</dbReference>
<dbReference type="GO" id="GO:0045786">
    <property type="term" value="P:negative regulation of cell cycle"/>
    <property type="evidence" value="ECO:0000304"/>
    <property type="project" value="UniProtKB"/>
</dbReference>
<dbReference type="GO" id="GO:0008285">
    <property type="term" value="P:negative regulation of cell population proliferation"/>
    <property type="evidence" value="ECO:0000314"/>
    <property type="project" value="CAFA"/>
</dbReference>
<dbReference type="GO" id="GO:0000122">
    <property type="term" value="P:negative regulation of transcription by RNA polymerase II"/>
    <property type="evidence" value="ECO:0000318"/>
    <property type="project" value="GO_Central"/>
</dbReference>
<dbReference type="GO" id="GO:0045944">
    <property type="term" value="P:positive regulation of transcription by RNA polymerase II"/>
    <property type="evidence" value="ECO:0000314"/>
    <property type="project" value="NTNU_SB"/>
</dbReference>
<dbReference type="GO" id="GO:0001817">
    <property type="term" value="P:regulation of cytokine production"/>
    <property type="evidence" value="ECO:0000318"/>
    <property type="project" value="GO_Central"/>
</dbReference>
<dbReference type="GO" id="GO:0002682">
    <property type="term" value="P:regulation of immune system process"/>
    <property type="evidence" value="ECO:0000318"/>
    <property type="project" value="GO_Central"/>
</dbReference>
<dbReference type="CDD" id="cd18206">
    <property type="entry name" value="BTB_POZ_ZBTB17_MIZ1"/>
    <property type="match status" value="1"/>
</dbReference>
<dbReference type="FunFam" id="3.30.160.60:FF:004080">
    <property type="match status" value="1"/>
</dbReference>
<dbReference type="FunFam" id="3.30.160.60:FF:001485">
    <property type="entry name" value="Krueppel-related zinc finger protein"/>
    <property type="match status" value="1"/>
</dbReference>
<dbReference type="FunFam" id="3.30.160.60:FF:000831">
    <property type="entry name" value="Zinc finger and BTB domain-containing protein 17"/>
    <property type="match status" value="1"/>
</dbReference>
<dbReference type="FunFam" id="3.30.710.10:FF:000048">
    <property type="entry name" value="zinc finger and BTB domain-containing protein 17"/>
    <property type="match status" value="1"/>
</dbReference>
<dbReference type="FunFam" id="3.30.160.60:FF:001021">
    <property type="entry name" value="zinc finger and BTB domain-containing protein 17 isoform X1"/>
    <property type="match status" value="1"/>
</dbReference>
<dbReference type="FunFam" id="3.30.160.60:FF:001022">
    <property type="entry name" value="zinc finger and BTB domain-containing protein 17 isoform X1"/>
    <property type="match status" value="1"/>
</dbReference>
<dbReference type="FunFam" id="3.30.160.60:FF:001032">
    <property type="entry name" value="zinc finger and BTB domain-containing protein 17 isoform X1"/>
    <property type="match status" value="1"/>
</dbReference>
<dbReference type="FunFam" id="3.30.160.60:FF:000225">
    <property type="entry name" value="zinc finger and BTB domain-containing protein 17 isoform X2"/>
    <property type="match status" value="3"/>
</dbReference>
<dbReference type="FunFam" id="3.30.160.60:FF:000346">
    <property type="entry name" value="zinc finger and BTB domain-containing protein 17 isoform X2"/>
    <property type="match status" value="1"/>
</dbReference>
<dbReference type="FunFam" id="3.30.160.60:FF:000446">
    <property type="entry name" value="Zinc finger protein"/>
    <property type="match status" value="1"/>
</dbReference>
<dbReference type="FunFam" id="3.30.160.60:FF:000358">
    <property type="entry name" value="zinc finger protein 24"/>
    <property type="match status" value="1"/>
</dbReference>
<dbReference type="Gene3D" id="3.30.160.60">
    <property type="entry name" value="Classic Zinc Finger"/>
    <property type="match status" value="13"/>
</dbReference>
<dbReference type="Gene3D" id="3.30.710.10">
    <property type="entry name" value="Potassium Channel Kv1.1, Chain A"/>
    <property type="match status" value="1"/>
</dbReference>
<dbReference type="InterPro" id="IPR000210">
    <property type="entry name" value="BTB/POZ_dom"/>
</dbReference>
<dbReference type="InterPro" id="IPR011333">
    <property type="entry name" value="SKP1/BTB/POZ_sf"/>
</dbReference>
<dbReference type="InterPro" id="IPR036236">
    <property type="entry name" value="Znf_C2H2_sf"/>
</dbReference>
<dbReference type="InterPro" id="IPR013087">
    <property type="entry name" value="Znf_C2H2_type"/>
</dbReference>
<dbReference type="PANTHER" id="PTHR24394:SF52">
    <property type="entry name" value="ZINC FINGER AND BTB DOMAIN CONTAINING 17"/>
    <property type="match status" value="1"/>
</dbReference>
<dbReference type="PANTHER" id="PTHR24394">
    <property type="entry name" value="ZINC FINGER PROTEIN"/>
    <property type="match status" value="1"/>
</dbReference>
<dbReference type="Pfam" id="PF00651">
    <property type="entry name" value="BTB"/>
    <property type="match status" value="1"/>
</dbReference>
<dbReference type="Pfam" id="PF00096">
    <property type="entry name" value="zf-C2H2"/>
    <property type="match status" value="9"/>
</dbReference>
<dbReference type="Pfam" id="PF13894">
    <property type="entry name" value="zf-C2H2_4"/>
    <property type="match status" value="1"/>
</dbReference>
<dbReference type="SMART" id="SM00225">
    <property type="entry name" value="BTB"/>
    <property type="match status" value="1"/>
</dbReference>
<dbReference type="SMART" id="SM00355">
    <property type="entry name" value="ZnF_C2H2"/>
    <property type="match status" value="13"/>
</dbReference>
<dbReference type="SUPFAM" id="SSF57667">
    <property type="entry name" value="beta-beta-alpha zinc fingers"/>
    <property type="match status" value="9"/>
</dbReference>
<dbReference type="SUPFAM" id="SSF54695">
    <property type="entry name" value="POZ domain"/>
    <property type="match status" value="1"/>
</dbReference>
<dbReference type="PROSITE" id="PS50097">
    <property type="entry name" value="BTB"/>
    <property type="match status" value="1"/>
</dbReference>
<dbReference type="PROSITE" id="PS00028">
    <property type="entry name" value="ZINC_FINGER_C2H2_1"/>
    <property type="match status" value="13"/>
</dbReference>
<dbReference type="PROSITE" id="PS50157">
    <property type="entry name" value="ZINC_FINGER_C2H2_2"/>
    <property type="match status" value="13"/>
</dbReference>
<comment type="function">
    <text evidence="10 12 13 14 15">Transcription factor that can function as an activator or repressor depending on its binding partners, and by targeting negative regulators of cell cycle progression. Plays a critical role in early lymphocyte development, where it is essential to prevent apoptosis in lymphoid precursors, allowing them to survive in response to IL7 and undergo proper lineage commitment. Has been shown to bind to the promoters of adenovirus major late protein and cyclin D1 and activate transcription. Required for early embryonic development during gastrulation. Represses RB1 transcription; this repression can be blocked by interaction with ZBTB49 isoform 3/ZNF509S1 (PubMed:25245946).</text>
</comment>
<comment type="subunit">
    <text evidence="6 7 8 9 10 11 13 15">Homooligomerizes (via the BTB/POZ domain), multimerization is required for DNA binding. Interacts (via the C-terminal zinc fingers) with GIF1; the interaction results in the recruitment of MYB to the CDKN1A/p21 and CDKN1B promoters and repression of transcription. Interacts with TRAF2, interfering with the binding of UBC13 to TRAF2, and inhibiting TRAF2 E3 ligase activity. Interacts with MYC (via the C-terminal helix-loop-helix motif); the interaction inhibits ZBTB17 transactivation and growth arrest activities and renders it insoluble in the nucleus. Also interacts with HCFC1, MAGEA4 and TMPRSS11A. Interacts with BCL6; the interaction inhibits ZBTB17 transactivation activity on target genes involved in cell cycle arrest. Interacts with ZBTB49 isoform 3/ZNF509S1; this interaction blocks ZBTB17-mediated repression of RB1 (PubMed:25245946).</text>
</comment>
<comment type="interaction">
    <interactant intactId="EBI-372156">
        <id>Q13105</id>
    </interactant>
    <interactant intactId="EBI-21535880">
        <id>Q92870-2</id>
        <label>APBB2</label>
    </interactant>
    <organismsDiffer>false</organismsDiffer>
    <experiments>3</experiments>
</comment>
<comment type="interaction">
    <interactant intactId="EBI-372156">
        <id>Q13105</id>
    </interactant>
    <interactant intactId="EBI-396176">
        <id>P51610</id>
        <label>HCFC1</label>
    </interactant>
    <organismsDiffer>false</organismsDiffer>
    <experiments>9</experiments>
</comment>
<comment type="interaction">
    <interactant intactId="EBI-372156">
        <id>Q13105</id>
    </interactant>
    <interactant intactId="EBI-743122">
        <id>P43358</id>
        <label>MAGEA4</label>
    </interactant>
    <organismsDiffer>false</organismsDiffer>
    <experiments>5</experiments>
</comment>
<comment type="interaction">
    <interactant intactId="EBI-372156">
        <id>Q13105</id>
    </interactant>
    <interactant intactId="EBI-447544">
        <id>P01106</id>
        <label>MYC</label>
    </interactant>
    <organismsDiffer>false</organismsDiffer>
    <experiments>9</experiments>
</comment>
<comment type="interaction">
    <interactant intactId="EBI-372156">
        <id>Q13105</id>
    </interactant>
    <interactant intactId="EBI-878369">
        <id>P04198</id>
        <label>MYCN</label>
    </interactant>
    <organismsDiffer>false</organismsDiffer>
    <experiments>3</experiments>
</comment>
<comment type="interaction">
    <interactant intactId="EBI-372156">
        <id>Q13105</id>
    </interactant>
    <interactant intactId="EBI-308302">
        <id>Q92547</id>
        <label>TOPBP1</label>
    </interactant>
    <organismsDiffer>false</organismsDiffer>
    <experiments>2</experiments>
</comment>
<comment type="interaction">
    <interactant intactId="EBI-372156">
        <id>Q13105</id>
    </interactant>
    <interactant intactId="EBI-742740">
        <id>Q96BR9</id>
        <label>ZBTB8A</label>
    </interactant>
    <organismsDiffer>false</organismsDiffer>
    <experiments>3</experiments>
</comment>
<comment type="interaction">
    <interactant intactId="EBI-15753185">
        <id>Q13105-1</id>
    </interactant>
    <interactant intactId="EBI-4289236">
        <id>Q07120</id>
        <label>Gfi1</label>
    </interactant>
    <organismsDiffer>true</organismsDiffer>
    <experiments>2</experiments>
</comment>
<comment type="subcellular location">
    <subcellularLocation>
        <location evidence="8 15">Nucleus</location>
    </subcellularLocation>
</comment>
<comment type="alternative products">
    <event type="alternative splicing"/>
    <isoform>
        <id>Q13105-1</id>
        <name>1</name>
        <sequence type="displayed"/>
    </isoform>
    <isoform>
        <id>Q13105-2</id>
        <name>2</name>
        <sequence type="described" ref="VSP_013424"/>
    </isoform>
    <isoform>
        <id>Q13105-3</id>
        <name>3</name>
        <sequence type="described" ref="VSP_044564"/>
    </isoform>
</comment>
<comment type="tissue specificity">
    <text evidence="10">Expressed in germinal center B-cells.</text>
</comment>
<comment type="PTM">
    <text evidence="1">Undergoes 'Lys-48'-linked polyubiquitination at Lys-397 and Lys-481 and subsequent proteasomal degradation in a TRAF2-dependent manner.</text>
</comment>
<comment type="similarity">
    <text evidence="18">Belongs to the krueppel C2H2-type zinc-finger protein family.</text>
</comment>
<accession>Q13105</accession>
<accession>A0AV07</accession>
<accession>B4DXB4</accession>
<accession>B7ZLQ9</accession>
<accession>F5H411</accession>
<accession>Q15932</accession>
<accession>Q5JYB2</accession>
<accession>Q9NUC9</accession>